<protein>
    <recommendedName>
        <fullName evidence="1">Cysteine--tRNA ligase</fullName>
        <ecNumber evidence="1">6.1.1.16</ecNumber>
    </recommendedName>
    <alternativeName>
        <fullName evidence="1">Cysteinyl-tRNA synthetase</fullName>
        <shortName evidence="1">CysRS</shortName>
    </alternativeName>
</protein>
<comment type="catalytic activity">
    <reaction evidence="1">
        <text>tRNA(Cys) + L-cysteine + ATP = L-cysteinyl-tRNA(Cys) + AMP + diphosphate</text>
        <dbReference type="Rhea" id="RHEA:17773"/>
        <dbReference type="Rhea" id="RHEA-COMP:9661"/>
        <dbReference type="Rhea" id="RHEA-COMP:9679"/>
        <dbReference type="ChEBI" id="CHEBI:30616"/>
        <dbReference type="ChEBI" id="CHEBI:33019"/>
        <dbReference type="ChEBI" id="CHEBI:35235"/>
        <dbReference type="ChEBI" id="CHEBI:78442"/>
        <dbReference type="ChEBI" id="CHEBI:78517"/>
        <dbReference type="ChEBI" id="CHEBI:456215"/>
        <dbReference type="EC" id="6.1.1.16"/>
    </reaction>
</comment>
<comment type="cofactor">
    <cofactor evidence="1">
        <name>Zn(2+)</name>
        <dbReference type="ChEBI" id="CHEBI:29105"/>
    </cofactor>
    <text evidence="1">Binds 1 zinc ion per subunit.</text>
</comment>
<comment type="subunit">
    <text evidence="1">Monomer.</text>
</comment>
<comment type="subcellular location">
    <subcellularLocation>
        <location evidence="1">Cytoplasm</location>
    </subcellularLocation>
</comment>
<comment type="similarity">
    <text evidence="1">Belongs to the class-I aminoacyl-tRNA synthetase family.</text>
</comment>
<accession>A1V5G8</accession>
<reference key="1">
    <citation type="journal article" date="2010" name="Genome Biol. Evol.">
        <title>Continuing evolution of Burkholderia mallei through genome reduction and large-scale rearrangements.</title>
        <authorList>
            <person name="Losada L."/>
            <person name="Ronning C.M."/>
            <person name="DeShazer D."/>
            <person name="Woods D."/>
            <person name="Fedorova N."/>
            <person name="Kim H.S."/>
            <person name="Shabalina S.A."/>
            <person name="Pearson T.R."/>
            <person name="Brinkac L."/>
            <person name="Tan P."/>
            <person name="Nandi T."/>
            <person name="Crabtree J."/>
            <person name="Badger J."/>
            <person name="Beckstrom-Sternberg S."/>
            <person name="Saqib M."/>
            <person name="Schutzer S.E."/>
            <person name="Keim P."/>
            <person name="Nierman W.C."/>
        </authorList>
    </citation>
    <scope>NUCLEOTIDE SEQUENCE [LARGE SCALE GENOMIC DNA]</scope>
    <source>
        <strain>SAVP1</strain>
    </source>
</reference>
<keyword id="KW-0030">Aminoacyl-tRNA synthetase</keyword>
<keyword id="KW-0067">ATP-binding</keyword>
<keyword id="KW-0963">Cytoplasm</keyword>
<keyword id="KW-0436">Ligase</keyword>
<keyword id="KW-0479">Metal-binding</keyword>
<keyword id="KW-0547">Nucleotide-binding</keyword>
<keyword id="KW-0648">Protein biosynthesis</keyword>
<keyword id="KW-0862">Zinc</keyword>
<proteinExistence type="inferred from homology"/>
<sequence>MESLRIYNTLARDKQDFVPRQPGEVRMYVCGITVYDYCHIGHARMVVVFDIVQRWLRARGYRVTYVRNITDIDDKIIRRAVENGETIQSLTRRFTDAMNADFDALGVERPDLEPRATEFIPQMLGMIEKLEANGYAYQAKDGDVNYSVRKFANYGRLSGKSLEDLRAGERVAANDAKEDPLDFVLWKRAKPQEPAGASWESKYGAGRPGWHIECSAMGCTLLGAHFDIHGGGQDLQFPHHENEIAQSEGATGQTFVNYWMHNGFVQVDSEKMSKSLGNFFTIREVLEKFDAEVVRFFIVRTHYRSPLNYSDVHLDDARASLTRLYTALKDATPDAQPLDWSEAHAQRFAAAMNDDFNTAVAVAVLFELATEVNRTREPALARQLRLLAGLLGLLGREPREFLQHAAGAARTGALEPHEIEARIAARVAAKQAKNYAEADRIRAELLEAGIALEDKPGGSTEWRRV</sequence>
<feature type="chain" id="PRO_1000006570" description="Cysteine--tRNA ligase">
    <location>
        <begin position="1"/>
        <end position="465"/>
    </location>
</feature>
<feature type="short sequence motif" description="'HIGH' region">
    <location>
        <begin position="32"/>
        <end position="42"/>
    </location>
</feature>
<feature type="short sequence motif" description="'KMSKS' region">
    <location>
        <begin position="271"/>
        <end position="275"/>
    </location>
</feature>
<feature type="binding site" evidence="1">
    <location>
        <position position="30"/>
    </location>
    <ligand>
        <name>Zn(2+)</name>
        <dbReference type="ChEBI" id="CHEBI:29105"/>
    </ligand>
</feature>
<feature type="binding site" evidence="1">
    <location>
        <position position="214"/>
    </location>
    <ligand>
        <name>Zn(2+)</name>
        <dbReference type="ChEBI" id="CHEBI:29105"/>
    </ligand>
</feature>
<feature type="binding site" evidence="1">
    <location>
        <position position="239"/>
    </location>
    <ligand>
        <name>Zn(2+)</name>
        <dbReference type="ChEBI" id="CHEBI:29105"/>
    </ligand>
</feature>
<feature type="binding site" evidence="1">
    <location>
        <position position="243"/>
    </location>
    <ligand>
        <name>Zn(2+)</name>
        <dbReference type="ChEBI" id="CHEBI:29105"/>
    </ligand>
</feature>
<feature type="binding site" evidence="1">
    <location>
        <position position="274"/>
    </location>
    <ligand>
        <name>ATP</name>
        <dbReference type="ChEBI" id="CHEBI:30616"/>
    </ligand>
</feature>
<organism>
    <name type="scientific">Burkholderia mallei (strain SAVP1)</name>
    <dbReference type="NCBI Taxonomy" id="320388"/>
    <lineage>
        <taxon>Bacteria</taxon>
        <taxon>Pseudomonadati</taxon>
        <taxon>Pseudomonadota</taxon>
        <taxon>Betaproteobacteria</taxon>
        <taxon>Burkholderiales</taxon>
        <taxon>Burkholderiaceae</taxon>
        <taxon>Burkholderia</taxon>
        <taxon>pseudomallei group</taxon>
    </lineage>
</organism>
<gene>
    <name evidence="1" type="primary">cysS</name>
    <name type="ordered locus">BMASAVP1_A2159</name>
</gene>
<dbReference type="EC" id="6.1.1.16" evidence="1"/>
<dbReference type="EMBL" id="CP000526">
    <property type="protein sequence ID" value="ABM50986.1"/>
    <property type="molecule type" value="Genomic_DNA"/>
</dbReference>
<dbReference type="RefSeq" id="WP_004192752.1">
    <property type="nucleotide sequence ID" value="NC_008785.1"/>
</dbReference>
<dbReference type="SMR" id="A1V5G8"/>
<dbReference type="GeneID" id="93060794"/>
<dbReference type="KEGG" id="bmv:BMASAVP1_A2159"/>
<dbReference type="HOGENOM" id="CLU_013528_0_2_4"/>
<dbReference type="GO" id="GO:0005829">
    <property type="term" value="C:cytosol"/>
    <property type="evidence" value="ECO:0007669"/>
    <property type="project" value="TreeGrafter"/>
</dbReference>
<dbReference type="GO" id="GO:0005524">
    <property type="term" value="F:ATP binding"/>
    <property type="evidence" value="ECO:0007669"/>
    <property type="project" value="UniProtKB-UniRule"/>
</dbReference>
<dbReference type="GO" id="GO:0004817">
    <property type="term" value="F:cysteine-tRNA ligase activity"/>
    <property type="evidence" value="ECO:0007669"/>
    <property type="project" value="UniProtKB-UniRule"/>
</dbReference>
<dbReference type="GO" id="GO:0008270">
    <property type="term" value="F:zinc ion binding"/>
    <property type="evidence" value="ECO:0007669"/>
    <property type="project" value="UniProtKB-UniRule"/>
</dbReference>
<dbReference type="GO" id="GO:0006423">
    <property type="term" value="P:cysteinyl-tRNA aminoacylation"/>
    <property type="evidence" value="ECO:0007669"/>
    <property type="project" value="UniProtKB-UniRule"/>
</dbReference>
<dbReference type="CDD" id="cd07963">
    <property type="entry name" value="Anticodon_Ia_Cys"/>
    <property type="match status" value="1"/>
</dbReference>
<dbReference type="CDD" id="cd00672">
    <property type="entry name" value="CysRS_core"/>
    <property type="match status" value="1"/>
</dbReference>
<dbReference type="FunFam" id="3.40.50.620:FF:000009">
    <property type="entry name" value="Cysteine--tRNA ligase"/>
    <property type="match status" value="1"/>
</dbReference>
<dbReference type="Gene3D" id="1.20.120.1910">
    <property type="entry name" value="Cysteine-tRNA ligase, C-terminal anti-codon recognition domain"/>
    <property type="match status" value="1"/>
</dbReference>
<dbReference type="Gene3D" id="3.40.50.620">
    <property type="entry name" value="HUPs"/>
    <property type="match status" value="1"/>
</dbReference>
<dbReference type="HAMAP" id="MF_00041">
    <property type="entry name" value="Cys_tRNA_synth"/>
    <property type="match status" value="1"/>
</dbReference>
<dbReference type="InterPro" id="IPR015803">
    <property type="entry name" value="Cys-tRNA-ligase"/>
</dbReference>
<dbReference type="InterPro" id="IPR015273">
    <property type="entry name" value="Cys-tRNA-synt_Ia_DALR"/>
</dbReference>
<dbReference type="InterPro" id="IPR024909">
    <property type="entry name" value="Cys-tRNA/MSH_ligase"/>
</dbReference>
<dbReference type="InterPro" id="IPR056411">
    <property type="entry name" value="CysS_C"/>
</dbReference>
<dbReference type="InterPro" id="IPR014729">
    <property type="entry name" value="Rossmann-like_a/b/a_fold"/>
</dbReference>
<dbReference type="InterPro" id="IPR032678">
    <property type="entry name" value="tRNA-synt_1_cat_dom"/>
</dbReference>
<dbReference type="InterPro" id="IPR009080">
    <property type="entry name" value="tRNAsynth_Ia_anticodon-bd"/>
</dbReference>
<dbReference type="NCBIfam" id="TIGR00435">
    <property type="entry name" value="cysS"/>
    <property type="match status" value="1"/>
</dbReference>
<dbReference type="PANTHER" id="PTHR10890:SF3">
    <property type="entry name" value="CYSTEINE--TRNA LIGASE, CYTOPLASMIC"/>
    <property type="match status" value="1"/>
</dbReference>
<dbReference type="PANTHER" id="PTHR10890">
    <property type="entry name" value="CYSTEINYL-TRNA SYNTHETASE"/>
    <property type="match status" value="1"/>
</dbReference>
<dbReference type="Pfam" id="PF23493">
    <property type="entry name" value="CysS_C"/>
    <property type="match status" value="1"/>
</dbReference>
<dbReference type="Pfam" id="PF09190">
    <property type="entry name" value="DALR_2"/>
    <property type="match status" value="1"/>
</dbReference>
<dbReference type="Pfam" id="PF01406">
    <property type="entry name" value="tRNA-synt_1e"/>
    <property type="match status" value="1"/>
</dbReference>
<dbReference type="PRINTS" id="PR00983">
    <property type="entry name" value="TRNASYNTHCYS"/>
</dbReference>
<dbReference type="SMART" id="SM00840">
    <property type="entry name" value="DALR_2"/>
    <property type="match status" value="1"/>
</dbReference>
<dbReference type="SUPFAM" id="SSF47323">
    <property type="entry name" value="Anticodon-binding domain of a subclass of class I aminoacyl-tRNA synthetases"/>
    <property type="match status" value="1"/>
</dbReference>
<dbReference type="SUPFAM" id="SSF52374">
    <property type="entry name" value="Nucleotidylyl transferase"/>
    <property type="match status" value="1"/>
</dbReference>
<name>SYC_BURMS</name>
<evidence type="ECO:0000255" key="1">
    <source>
        <dbReference type="HAMAP-Rule" id="MF_00041"/>
    </source>
</evidence>